<sequence length="501" mass="57169">MFNYVIILPLALFLLAYKFFFTSKKQRYYLPPSPSYSLPILGHHLLIKPPVHRLFHRLSNIHGPIFYLRLGSRRAVVISSSSLARECFTGQNDVIVSNRPRFLTSKYIAYNYTTIATTSYGDHWRNLRRICSLEIVSSKRLANFLHIRKEEIQRMLTRLSRDARVGKEVELESILYDLTFNNIVRMVTGKIYYGDDVSDKEEAELFKKLFTFITTNSGARHPGEYLPFMKIFGGSFEKEVKAAAKVIDEMLQRLLDECKSDKDGNTMVNHLLSLQQDDPEYYTDIIIKGLMLGIMVASSETSALTIEWAMASLLNHPKVLDKVKLEIDEIIGQDRLIEESDIANLPYLQNVVSETLRLHPAAPVLVPRSTAEDIKIGGYDVPRDTMVMVNAWAIHRDPDLWTEPERFNPERFNGGEGEKDDVRMLIAFGSGRRICPGVGLAHKIVTLALGSLIQCFDWKKVNEKEIDMSEGPGMAMRMMVPLRALCKTRPIMNKLPAYTKV</sequence>
<gene>
    <name evidence="5" type="primary">CYP81F4</name>
    <name evidence="7" type="ordered locus">At4g37410</name>
    <name evidence="8" type="ORF">F6G17.60</name>
</gene>
<accession>Q9SZU1</accession>
<dbReference type="EC" id="1.14.-.-" evidence="6"/>
<dbReference type="EMBL" id="AL035601">
    <property type="protein sequence ID" value="CAB38208.1"/>
    <property type="molecule type" value="Genomic_DNA"/>
</dbReference>
<dbReference type="EMBL" id="AL161591">
    <property type="protein sequence ID" value="CAB80406.1"/>
    <property type="molecule type" value="Genomic_DNA"/>
</dbReference>
<dbReference type="EMBL" id="CP002687">
    <property type="protein sequence ID" value="AEE86790.1"/>
    <property type="molecule type" value="Genomic_DNA"/>
</dbReference>
<dbReference type="EMBL" id="BT029244">
    <property type="protein sequence ID" value="ABJ98576.1"/>
    <property type="molecule type" value="mRNA"/>
</dbReference>
<dbReference type="EMBL" id="AY084273">
    <property type="protein sequence ID" value="AAM60864.1"/>
    <property type="molecule type" value="mRNA"/>
</dbReference>
<dbReference type="PIR" id="T04735">
    <property type="entry name" value="T04735"/>
</dbReference>
<dbReference type="RefSeq" id="NP_195457.1">
    <property type="nucleotide sequence ID" value="NM_119904.2"/>
</dbReference>
<dbReference type="SMR" id="Q9SZU1"/>
<dbReference type="FunCoup" id="Q9SZU1">
    <property type="interactions" value="428"/>
</dbReference>
<dbReference type="STRING" id="3702.Q9SZU1"/>
<dbReference type="iPTMnet" id="Q9SZU1"/>
<dbReference type="PaxDb" id="3702-AT4G37410.1"/>
<dbReference type="ProteomicsDB" id="239142"/>
<dbReference type="EnsemblPlants" id="AT4G37410.1">
    <property type="protein sequence ID" value="AT4G37410.1"/>
    <property type="gene ID" value="AT4G37410"/>
</dbReference>
<dbReference type="GeneID" id="829895"/>
<dbReference type="Gramene" id="AT4G37410.1">
    <property type="protein sequence ID" value="AT4G37410.1"/>
    <property type="gene ID" value="AT4G37410"/>
</dbReference>
<dbReference type="KEGG" id="ath:AT4G37410"/>
<dbReference type="Araport" id="AT4G37410"/>
<dbReference type="TAIR" id="AT4G37410">
    <property type="gene designation" value="CYP81F4"/>
</dbReference>
<dbReference type="eggNOG" id="KOG0156">
    <property type="taxonomic scope" value="Eukaryota"/>
</dbReference>
<dbReference type="HOGENOM" id="CLU_001570_4_0_1"/>
<dbReference type="InParanoid" id="Q9SZU1"/>
<dbReference type="OMA" id="CKTRPIM"/>
<dbReference type="OrthoDB" id="2789670at2759"/>
<dbReference type="PhylomeDB" id="Q9SZU1"/>
<dbReference type="BioCyc" id="ARA:AT4G37410-MONOMER"/>
<dbReference type="PRO" id="PR:Q9SZU1"/>
<dbReference type="Proteomes" id="UP000006548">
    <property type="component" value="Chromosome 4"/>
</dbReference>
<dbReference type="ExpressionAtlas" id="Q9SZU1">
    <property type="expression patterns" value="baseline and differential"/>
</dbReference>
<dbReference type="GO" id="GO:0005783">
    <property type="term" value="C:endoplasmic reticulum"/>
    <property type="evidence" value="ECO:0007005"/>
    <property type="project" value="TAIR"/>
</dbReference>
<dbReference type="GO" id="GO:0016020">
    <property type="term" value="C:membrane"/>
    <property type="evidence" value="ECO:0007669"/>
    <property type="project" value="UniProtKB-SubCell"/>
</dbReference>
<dbReference type="GO" id="GO:0020037">
    <property type="term" value="F:heme binding"/>
    <property type="evidence" value="ECO:0007669"/>
    <property type="project" value="InterPro"/>
</dbReference>
<dbReference type="GO" id="GO:0005506">
    <property type="term" value="F:iron ion binding"/>
    <property type="evidence" value="ECO:0007669"/>
    <property type="project" value="InterPro"/>
</dbReference>
<dbReference type="GO" id="GO:0004497">
    <property type="term" value="F:monooxygenase activity"/>
    <property type="evidence" value="ECO:0000314"/>
    <property type="project" value="TAIR"/>
</dbReference>
<dbReference type="GO" id="GO:0016705">
    <property type="term" value="F:oxidoreductase activity, acting on paired donors, with incorporation or reduction of molecular oxygen"/>
    <property type="evidence" value="ECO:0007669"/>
    <property type="project" value="InterPro"/>
</dbReference>
<dbReference type="GO" id="GO:0042343">
    <property type="term" value="P:indole glucosinolate metabolic process"/>
    <property type="evidence" value="ECO:0000314"/>
    <property type="project" value="TAIR"/>
</dbReference>
<dbReference type="CDD" id="cd20653">
    <property type="entry name" value="CYP81"/>
    <property type="match status" value="1"/>
</dbReference>
<dbReference type="FunFam" id="1.10.630.10:FF:000023">
    <property type="entry name" value="Cytochrome P450 family protein"/>
    <property type="match status" value="1"/>
</dbReference>
<dbReference type="Gene3D" id="1.10.630.10">
    <property type="entry name" value="Cytochrome P450"/>
    <property type="match status" value="1"/>
</dbReference>
<dbReference type="InterPro" id="IPR001128">
    <property type="entry name" value="Cyt_P450"/>
</dbReference>
<dbReference type="InterPro" id="IPR017972">
    <property type="entry name" value="Cyt_P450_CS"/>
</dbReference>
<dbReference type="InterPro" id="IPR002401">
    <property type="entry name" value="Cyt_P450_E_grp-I"/>
</dbReference>
<dbReference type="InterPro" id="IPR036396">
    <property type="entry name" value="Cyt_P450_sf"/>
</dbReference>
<dbReference type="InterPro" id="IPR050651">
    <property type="entry name" value="Plant_Cytochrome_P450_Monoox"/>
</dbReference>
<dbReference type="PANTHER" id="PTHR47947">
    <property type="entry name" value="CYTOCHROME P450 82C3-RELATED"/>
    <property type="match status" value="1"/>
</dbReference>
<dbReference type="PANTHER" id="PTHR47947:SF62">
    <property type="entry name" value="CYTOCHROME P450, FAMILY 81, SUBFAMILY D, POLYPEPTIDE 5"/>
    <property type="match status" value="1"/>
</dbReference>
<dbReference type="Pfam" id="PF00067">
    <property type="entry name" value="p450"/>
    <property type="match status" value="1"/>
</dbReference>
<dbReference type="PRINTS" id="PR00463">
    <property type="entry name" value="EP450I"/>
</dbReference>
<dbReference type="PRINTS" id="PR00385">
    <property type="entry name" value="P450"/>
</dbReference>
<dbReference type="SUPFAM" id="SSF48264">
    <property type="entry name" value="Cytochrome P450"/>
    <property type="match status" value="1"/>
</dbReference>
<dbReference type="PROSITE" id="PS00086">
    <property type="entry name" value="CYTOCHROME_P450"/>
    <property type="match status" value="1"/>
</dbReference>
<protein>
    <recommendedName>
        <fullName evidence="6">Cytochrome P450 81F4</fullName>
        <ecNumber evidence="6">1.14.-.-</ecNumber>
    </recommendedName>
</protein>
<feature type="chain" id="PRO_0000435494" description="Cytochrome P450 81F4">
    <location>
        <begin position="1"/>
        <end position="501"/>
    </location>
</feature>
<feature type="transmembrane region" description="Helical" evidence="2">
    <location>
        <begin position="285"/>
        <end position="305"/>
    </location>
</feature>
<feature type="binding site" description="axial binding residue" evidence="1">
    <location>
        <position position="435"/>
    </location>
    <ligand>
        <name>heme</name>
        <dbReference type="ChEBI" id="CHEBI:30413"/>
    </ligand>
    <ligandPart>
        <name>Fe</name>
        <dbReference type="ChEBI" id="CHEBI:18248"/>
    </ligandPart>
</feature>
<feature type="cross-link" description="Glycyl lysine isopeptide (Lys-Gly) (interchain with G-Cter in ubiquitin)" evidence="3">
    <location>
        <position position="245"/>
    </location>
</feature>
<keyword id="KW-0349">Heme</keyword>
<keyword id="KW-0408">Iron</keyword>
<keyword id="KW-1017">Isopeptide bond</keyword>
<keyword id="KW-0472">Membrane</keyword>
<keyword id="KW-0479">Metal-binding</keyword>
<keyword id="KW-0503">Monooxygenase</keyword>
<keyword id="KW-0560">Oxidoreductase</keyword>
<keyword id="KW-1185">Reference proteome</keyword>
<keyword id="KW-0812">Transmembrane</keyword>
<keyword id="KW-1133">Transmembrane helix</keyword>
<keyword id="KW-0832">Ubl conjugation</keyword>
<name>C81F4_ARATH</name>
<reference key="1">
    <citation type="journal article" date="1999" name="Nature">
        <title>Sequence and analysis of chromosome 4 of the plant Arabidopsis thaliana.</title>
        <authorList>
            <person name="Mayer K.F.X."/>
            <person name="Schueller C."/>
            <person name="Wambutt R."/>
            <person name="Murphy G."/>
            <person name="Volckaert G."/>
            <person name="Pohl T."/>
            <person name="Duesterhoeft A."/>
            <person name="Stiekema W."/>
            <person name="Entian K.-D."/>
            <person name="Terryn N."/>
            <person name="Harris B."/>
            <person name="Ansorge W."/>
            <person name="Brandt P."/>
            <person name="Grivell L.A."/>
            <person name="Rieger M."/>
            <person name="Weichselgartner M."/>
            <person name="de Simone V."/>
            <person name="Obermaier B."/>
            <person name="Mache R."/>
            <person name="Mueller M."/>
            <person name="Kreis M."/>
            <person name="Delseny M."/>
            <person name="Puigdomenech P."/>
            <person name="Watson M."/>
            <person name="Schmidtheini T."/>
            <person name="Reichert B."/>
            <person name="Portetelle D."/>
            <person name="Perez-Alonso M."/>
            <person name="Boutry M."/>
            <person name="Bancroft I."/>
            <person name="Vos P."/>
            <person name="Hoheisel J."/>
            <person name="Zimmermann W."/>
            <person name="Wedler H."/>
            <person name="Ridley P."/>
            <person name="Langham S.-A."/>
            <person name="McCullagh B."/>
            <person name="Bilham L."/>
            <person name="Robben J."/>
            <person name="van der Schueren J."/>
            <person name="Grymonprez B."/>
            <person name="Chuang Y.-J."/>
            <person name="Vandenbussche F."/>
            <person name="Braeken M."/>
            <person name="Weltjens I."/>
            <person name="Voet M."/>
            <person name="Bastiaens I."/>
            <person name="Aert R."/>
            <person name="Defoor E."/>
            <person name="Weitzenegger T."/>
            <person name="Bothe G."/>
            <person name="Ramsperger U."/>
            <person name="Hilbert H."/>
            <person name="Braun M."/>
            <person name="Holzer E."/>
            <person name="Brandt A."/>
            <person name="Peters S."/>
            <person name="van Staveren M."/>
            <person name="Dirkse W."/>
            <person name="Mooijman P."/>
            <person name="Klein Lankhorst R."/>
            <person name="Rose M."/>
            <person name="Hauf J."/>
            <person name="Koetter P."/>
            <person name="Berneiser S."/>
            <person name="Hempel S."/>
            <person name="Feldpausch M."/>
            <person name="Lamberth S."/>
            <person name="Van den Daele H."/>
            <person name="De Keyser A."/>
            <person name="Buysshaert C."/>
            <person name="Gielen J."/>
            <person name="Villarroel R."/>
            <person name="De Clercq R."/>
            <person name="van Montagu M."/>
            <person name="Rogers J."/>
            <person name="Cronin A."/>
            <person name="Quail M.A."/>
            <person name="Bray-Allen S."/>
            <person name="Clark L."/>
            <person name="Doggett J."/>
            <person name="Hall S."/>
            <person name="Kay M."/>
            <person name="Lennard N."/>
            <person name="McLay K."/>
            <person name="Mayes R."/>
            <person name="Pettett A."/>
            <person name="Rajandream M.A."/>
            <person name="Lyne M."/>
            <person name="Benes V."/>
            <person name="Rechmann S."/>
            <person name="Borkova D."/>
            <person name="Bloecker H."/>
            <person name="Scharfe M."/>
            <person name="Grimm M."/>
            <person name="Loehnert T.-H."/>
            <person name="Dose S."/>
            <person name="de Haan M."/>
            <person name="Maarse A.C."/>
            <person name="Schaefer M."/>
            <person name="Mueller-Auer S."/>
            <person name="Gabel C."/>
            <person name="Fuchs M."/>
            <person name="Fartmann B."/>
            <person name="Granderath K."/>
            <person name="Dauner D."/>
            <person name="Herzl A."/>
            <person name="Neumann S."/>
            <person name="Argiriou A."/>
            <person name="Vitale D."/>
            <person name="Liguori R."/>
            <person name="Piravandi E."/>
            <person name="Massenet O."/>
            <person name="Quigley F."/>
            <person name="Clabauld G."/>
            <person name="Muendlein A."/>
            <person name="Felber R."/>
            <person name="Schnabl S."/>
            <person name="Hiller R."/>
            <person name="Schmidt W."/>
            <person name="Lecharny A."/>
            <person name="Aubourg S."/>
            <person name="Chefdor F."/>
            <person name="Cooke R."/>
            <person name="Berger C."/>
            <person name="Monfort A."/>
            <person name="Casacuberta E."/>
            <person name="Gibbons T."/>
            <person name="Weber N."/>
            <person name="Vandenbol M."/>
            <person name="Bargues M."/>
            <person name="Terol J."/>
            <person name="Torres A."/>
            <person name="Perez-Perez A."/>
            <person name="Purnelle B."/>
            <person name="Bent E."/>
            <person name="Johnson S."/>
            <person name="Tacon D."/>
            <person name="Jesse T."/>
            <person name="Heijnen L."/>
            <person name="Schwarz S."/>
            <person name="Scholler P."/>
            <person name="Heber S."/>
            <person name="Francs P."/>
            <person name="Bielke C."/>
            <person name="Frishman D."/>
            <person name="Haase D."/>
            <person name="Lemcke K."/>
            <person name="Mewes H.-W."/>
            <person name="Stocker S."/>
            <person name="Zaccaria P."/>
            <person name="Bevan M."/>
            <person name="Wilson R.K."/>
            <person name="de la Bastide M."/>
            <person name="Habermann K."/>
            <person name="Parnell L."/>
            <person name="Dedhia N."/>
            <person name="Gnoj L."/>
            <person name="Schutz K."/>
            <person name="Huang E."/>
            <person name="Spiegel L."/>
            <person name="Sekhon M."/>
            <person name="Murray J."/>
            <person name="Sheet P."/>
            <person name="Cordes M."/>
            <person name="Abu-Threideh J."/>
            <person name="Stoneking T."/>
            <person name="Kalicki J."/>
            <person name="Graves T."/>
            <person name="Harmon G."/>
            <person name="Edwards J."/>
            <person name="Latreille P."/>
            <person name="Courtney L."/>
            <person name="Cloud J."/>
            <person name="Abbott A."/>
            <person name="Scott K."/>
            <person name="Johnson D."/>
            <person name="Minx P."/>
            <person name="Bentley D."/>
            <person name="Fulton B."/>
            <person name="Miller N."/>
            <person name="Greco T."/>
            <person name="Kemp K."/>
            <person name="Kramer J."/>
            <person name="Fulton L."/>
            <person name="Mardis E."/>
            <person name="Dante M."/>
            <person name="Pepin K."/>
            <person name="Hillier L.W."/>
            <person name="Nelson J."/>
            <person name="Spieth J."/>
            <person name="Ryan E."/>
            <person name="Andrews S."/>
            <person name="Geisel C."/>
            <person name="Layman D."/>
            <person name="Du H."/>
            <person name="Ali J."/>
            <person name="Berghoff A."/>
            <person name="Jones K."/>
            <person name="Drone K."/>
            <person name="Cotton M."/>
            <person name="Joshu C."/>
            <person name="Antonoiu B."/>
            <person name="Zidanic M."/>
            <person name="Strong C."/>
            <person name="Sun H."/>
            <person name="Lamar B."/>
            <person name="Yordan C."/>
            <person name="Ma P."/>
            <person name="Zhong J."/>
            <person name="Preston R."/>
            <person name="Vil D."/>
            <person name="Shekher M."/>
            <person name="Matero A."/>
            <person name="Shah R."/>
            <person name="Swaby I.K."/>
            <person name="O'Shaughnessy A."/>
            <person name="Rodriguez M."/>
            <person name="Hoffman J."/>
            <person name="Till S."/>
            <person name="Granat S."/>
            <person name="Shohdy N."/>
            <person name="Hasegawa A."/>
            <person name="Hameed A."/>
            <person name="Lodhi M."/>
            <person name="Johnson A."/>
            <person name="Chen E."/>
            <person name="Marra M.A."/>
            <person name="Martienssen R."/>
            <person name="McCombie W.R."/>
        </authorList>
    </citation>
    <scope>NUCLEOTIDE SEQUENCE [LARGE SCALE GENOMIC DNA]</scope>
    <source>
        <strain>cv. Columbia</strain>
    </source>
</reference>
<reference key="2">
    <citation type="journal article" date="2017" name="Plant J.">
        <title>Araport11: a complete reannotation of the Arabidopsis thaliana reference genome.</title>
        <authorList>
            <person name="Cheng C.Y."/>
            <person name="Krishnakumar V."/>
            <person name="Chan A.P."/>
            <person name="Thibaud-Nissen F."/>
            <person name="Schobel S."/>
            <person name="Town C.D."/>
        </authorList>
    </citation>
    <scope>GENOME REANNOTATION</scope>
    <source>
        <strain>cv. Columbia</strain>
    </source>
</reference>
<reference key="3">
    <citation type="submission" date="2006-10" db="EMBL/GenBank/DDBJ databases">
        <title>Arabidopsis ORF Clones.</title>
        <authorList>
            <person name="Quinitio C."/>
            <person name="Chen H."/>
            <person name="Kim C.J."/>
            <person name="Shinn P."/>
            <person name="Ecker J.R."/>
        </authorList>
    </citation>
    <scope>NUCLEOTIDE SEQUENCE [LARGE SCALE MRNA]</scope>
    <source>
        <strain>cv. Columbia</strain>
    </source>
</reference>
<reference key="4">
    <citation type="submission" date="2002-03" db="EMBL/GenBank/DDBJ databases">
        <title>Full-length cDNA from Arabidopsis thaliana.</title>
        <authorList>
            <person name="Brover V.V."/>
            <person name="Troukhan M.E."/>
            <person name="Alexandrov N.A."/>
            <person name="Lu Y.-P."/>
            <person name="Flavell R.B."/>
            <person name="Feldmann K.A."/>
        </authorList>
    </citation>
    <scope>NUCLEOTIDE SEQUENCE [LARGE SCALE MRNA]</scope>
</reference>
<reference key="5">
    <citation type="journal article" date="2009" name="Plant J.">
        <title>Tandem affinity purification and mass spectrometric analysis of ubiquitylated proteins in Arabidopsis.</title>
        <authorList>
            <person name="Saracco S.A."/>
            <person name="Hansson M."/>
            <person name="Scalf M."/>
            <person name="Walker J.M."/>
            <person name="Smith L.M."/>
            <person name="Vierstra R.D."/>
        </authorList>
    </citation>
    <scope>UBIQUITINATION [LARGE SCALE ANALYSIS] AT LYS-245</scope>
    <scope>IDENTIFICATION BY MASS SPECTROMETRY</scope>
</reference>
<reference key="6">
    <citation type="journal article" date="2011" name="Plant Cell">
        <title>Metabolic engineering in Nicotiana benthamiana reveals key enzyme functions in Arabidopsis indole glucosinolate modification.</title>
        <authorList>
            <person name="Pfalz M."/>
            <person name="Mikkelsen M.D."/>
            <person name="Bednarek P."/>
            <person name="Olsen C.E."/>
            <person name="Halkier B.A."/>
            <person name="Kroymann J."/>
        </authorList>
    </citation>
    <scope>FUNCTION</scope>
</reference>
<proteinExistence type="evidence at protein level"/>
<evidence type="ECO:0000250" key="1">
    <source>
        <dbReference type="UniProtKB" id="Q96242"/>
    </source>
</evidence>
<evidence type="ECO:0000255" key="2"/>
<evidence type="ECO:0000269" key="3">
    <source>
    </source>
</evidence>
<evidence type="ECO:0000269" key="4">
    <source>
    </source>
</evidence>
<evidence type="ECO:0000303" key="5">
    <source>
    </source>
</evidence>
<evidence type="ECO:0000305" key="6"/>
<evidence type="ECO:0000312" key="7">
    <source>
        <dbReference type="Araport" id="AT4G37410"/>
    </source>
</evidence>
<evidence type="ECO:0000312" key="8">
    <source>
        <dbReference type="EMBL" id="CAB38208.1"/>
    </source>
</evidence>
<comment type="function">
    <text evidence="4">Involved in indole glucosinolate biosynthesis. Catalyzes hydroxylation reactions of the glucosinolate indole ring. Converts indol-3-yl-methylglucosinolate (I3M) to 1-hydroxy-indol-3-yl-methylglucosinolate (1OH-I3M) intermediate. This hydroxy intermediates is converted to 1-methoxy-indol-3-yl-methylglucosinolate (1MO-I3M) by indole glucosinolate methyltransferase 1 and 2 (IGMT1 and IGMT2).</text>
</comment>
<comment type="cofactor">
    <cofactor evidence="1">
        <name>heme</name>
        <dbReference type="ChEBI" id="CHEBI:30413"/>
    </cofactor>
</comment>
<comment type="pathway">
    <text evidence="6">Secondary metabolite biosynthesis.</text>
</comment>
<comment type="subcellular location">
    <subcellularLocation>
        <location evidence="2">Membrane</location>
        <topology evidence="2">Single-pass membrane protein</topology>
    </subcellularLocation>
</comment>
<comment type="similarity">
    <text evidence="6">Belongs to the cytochrome P450 family.</text>
</comment>
<organism>
    <name type="scientific">Arabidopsis thaliana</name>
    <name type="common">Mouse-ear cress</name>
    <dbReference type="NCBI Taxonomy" id="3702"/>
    <lineage>
        <taxon>Eukaryota</taxon>
        <taxon>Viridiplantae</taxon>
        <taxon>Streptophyta</taxon>
        <taxon>Embryophyta</taxon>
        <taxon>Tracheophyta</taxon>
        <taxon>Spermatophyta</taxon>
        <taxon>Magnoliopsida</taxon>
        <taxon>eudicotyledons</taxon>
        <taxon>Gunneridae</taxon>
        <taxon>Pentapetalae</taxon>
        <taxon>rosids</taxon>
        <taxon>malvids</taxon>
        <taxon>Brassicales</taxon>
        <taxon>Brassicaceae</taxon>
        <taxon>Camelineae</taxon>
        <taxon>Arabidopsis</taxon>
    </lineage>
</organism>